<accession>P09525</accession>
<accession>B4DDF9</accession>
<accession>Q6LES2</accession>
<accession>Q96F33</accession>
<accession>Q9BWK1</accession>
<evidence type="ECO:0000250" key="1"/>
<evidence type="ECO:0000250" key="2">
    <source>
        <dbReference type="UniProtKB" id="P08132"/>
    </source>
</evidence>
<evidence type="ECO:0000250" key="3">
    <source>
        <dbReference type="UniProtKB" id="P50994"/>
    </source>
</evidence>
<evidence type="ECO:0000255" key="4">
    <source>
        <dbReference type="PROSITE-ProRule" id="PRU01245"/>
    </source>
</evidence>
<evidence type="ECO:0000269" key="5">
    <source>
    </source>
</evidence>
<evidence type="ECO:0000303" key="6">
    <source>
    </source>
</evidence>
<evidence type="ECO:0000305" key="7"/>
<evidence type="ECO:0000312" key="8">
    <source>
        <dbReference type="HGNC" id="HGNC:542"/>
    </source>
</evidence>
<evidence type="ECO:0007744" key="9">
    <source>
    </source>
</evidence>
<evidence type="ECO:0007744" key="10">
    <source>
    </source>
</evidence>
<evidence type="ECO:0007744" key="11">
    <source>
    </source>
</evidence>
<evidence type="ECO:0007829" key="12">
    <source>
        <dbReference type="PDB" id="2ZOC"/>
    </source>
</evidence>
<protein>
    <recommendedName>
        <fullName evidence="7">Annexin A4</fullName>
    </recommendedName>
    <alternativeName>
        <fullName>35-beta calcimedin</fullName>
    </alternativeName>
    <alternativeName>
        <fullName>Annexin IV</fullName>
    </alternativeName>
    <alternativeName>
        <fullName>Annexin-4</fullName>
    </alternativeName>
    <alternativeName>
        <fullName>Carbohydrate-binding protein p33/p41</fullName>
    </alternativeName>
    <alternativeName>
        <fullName>Chromobindin-4</fullName>
    </alternativeName>
    <alternativeName>
        <fullName>Endonexin I</fullName>
    </alternativeName>
    <alternativeName>
        <fullName>Lipocortin IV</fullName>
    </alternativeName>
    <alternativeName>
        <fullName>P32.5</fullName>
    </alternativeName>
    <alternativeName>
        <fullName>PP4-X</fullName>
    </alternativeName>
    <alternativeName>
        <fullName>Placental anticoagulant protein II</fullName>
        <shortName>PAP-II</shortName>
    </alternativeName>
    <alternativeName>
        <fullName>Protein II</fullName>
    </alternativeName>
</protein>
<comment type="function">
    <text evidence="1">Calcium/phospholipid-binding protein which promotes membrane fusion and is involved in exocytosis.</text>
</comment>
<comment type="interaction">
    <interactant intactId="EBI-2556852">
        <id>P09525</id>
    </interactant>
    <interactant intactId="EBI-12275524">
        <id>P23560-2</id>
        <label>BDNF</label>
    </interactant>
    <organismsDiffer>false</organismsDiffer>
    <experiments>3</experiments>
</comment>
<comment type="interaction">
    <interactant intactId="EBI-2556852">
        <id>P09525</id>
    </interactant>
    <interactant intactId="EBI-718729">
        <id>P55212</id>
        <label>CASP6</label>
    </interactant>
    <organismsDiffer>false</organismsDiffer>
    <experiments>3</experiments>
</comment>
<comment type="interaction">
    <interactant intactId="EBI-2556852">
        <id>P09525</id>
    </interactant>
    <interactant intactId="EBI-739060">
        <id>P02511</id>
        <label>CRYAB</label>
    </interactant>
    <organismsDiffer>false</organismsDiffer>
    <experiments>3</experiments>
</comment>
<comment type="interaction">
    <interactant intactId="EBI-2556852">
        <id>P09525</id>
    </interactant>
    <interactant intactId="EBI-12593112">
        <id>O75190-2</id>
        <label>DNAJB6</label>
    </interactant>
    <organismsDiffer>false</organismsDiffer>
    <experiments>3</experiments>
</comment>
<comment type="interaction">
    <interactant intactId="EBI-2556852">
        <id>P09525</id>
    </interactant>
    <interactant intactId="EBI-395638">
        <id>O14645</id>
        <label>DNALI1</label>
    </interactant>
    <organismsDiffer>false</organismsDiffer>
    <experiments>3</experiments>
</comment>
<comment type="interaction">
    <interactant intactId="EBI-2556852">
        <id>P09525</id>
    </interactant>
    <interactant intactId="EBI-10226858">
        <id>Q0VDC6</id>
        <label>FKBP1A</label>
    </interactant>
    <organismsDiffer>false</organismsDiffer>
    <experiments>3</experiments>
</comment>
<comment type="interaction">
    <interactant intactId="EBI-2556852">
        <id>P09525</id>
    </interactant>
    <interactant intactId="EBI-948266">
        <id>O14901</id>
        <label>KLF11</label>
    </interactant>
    <organismsDiffer>false</organismsDiffer>
    <experiments>3</experiments>
</comment>
<comment type="interaction">
    <interactant intactId="EBI-2556852">
        <id>P09525</id>
    </interactant>
    <interactant intactId="EBI-21591415">
        <id>P13473-2</id>
        <label>LAMP2</label>
    </interactant>
    <organismsDiffer>false</organismsDiffer>
    <experiments>3</experiments>
</comment>
<comment type="interaction">
    <interactant intactId="EBI-2556852">
        <id>P09525</id>
    </interactant>
    <interactant intactId="EBI-1042511">
        <id>Q9UM07</id>
        <label>PADI4</label>
    </interactant>
    <organismsDiffer>false</organismsDiffer>
    <experiments>8</experiments>
</comment>
<comment type="interaction">
    <interactant intactId="EBI-2556852">
        <id>P09525</id>
    </interactant>
    <interactant intactId="EBI-5280197">
        <id>O75400-2</id>
        <label>PRPF40A</label>
    </interactant>
    <organismsDiffer>false</organismsDiffer>
    <experiments>3</experiments>
</comment>
<comment type="interaction">
    <interactant intactId="EBI-2556852">
        <id>P09525</id>
    </interactant>
    <interactant intactId="EBI-286642">
        <id>P62826</id>
        <label>RAN</label>
    </interactant>
    <organismsDiffer>false</organismsDiffer>
    <experiments>3</experiments>
</comment>
<comment type="interaction">
    <interactant intactId="EBI-2556852">
        <id>P09525</id>
    </interactant>
    <interactant intactId="EBI-1053431">
        <id>P49591</id>
        <label>SARS1</label>
    </interactant>
    <organismsDiffer>false</organismsDiffer>
    <experiments>3</experiments>
</comment>
<comment type="interaction">
    <interactant intactId="EBI-2556852">
        <id>P09525</id>
    </interactant>
    <interactant intactId="EBI-717399">
        <id>Q9BSI4</id>
        <label>TINF2</label>
    </interactant>
    <organismsDiffer>false</organismsDiffer>
    <experiments>2</experiments>
</comment>
<comment type="subcellular location">
    <subcellularLocation>
        <location evidence="3">Zymogen granule membrane</location>
        <topology evidence="3">Peripheral membrane protein</topology>
    </subcellularLocation>
</comment>
<comment type="alternative products">
    <event type="alternative splicing"/>
    <event type="alternative initiation"/>
    <isoform>
        <id>P09525-1</id>
        <name>1</name>
        <sequence type="displayed"/>
    </isoform>
    <isoform>
        <id>P09525-2</id>
        <name>2</name>
        <sequence type="described" ref="VSP_056396"/>
    </isoform>
    <isoform>
        <id>P09525-3</id>
        <name>3</name>
        <sequence type="described" ref="VSP_061413"/>
    </isoform>
</comment>
<comment type="domain">
    <text>A pair of annexin repeats may form one binding site for calcium and phospholipid.</text>
</comment>
<comment type="miscellaneous">
    <text>Seems to bind one calcium ion with high affinity.</text>
</comment>
<comment type="similarity">
    <text evidence="4 7">Belongs to the annexin family.</text>
</comment>
<gene>
    <name evidence="8" type="primary">ANXA4</name>
    <name type="synonym">ANX4</name>
</gene>
<name>ANXA4_HUMAN</name>
<reference key="1">
    <citation type="journal article" date="1988" name="Behring Inst. Mitt.">
        <title>Isolation and expression of cDNA coding for a new member of the phospholipase A2 inhibitor family.</title>
        <authorList>
            <person name="Grundmann U."/>
            <person name="Amann E."/>
            <person name="Abel K.-J."/>
            <person name="Kuepper H.A."/>
        </authorList>
    </citation>
    <scope>NUCLEOTIDE SEQUENCE [MRNA] (ISOFORM 3)</scope>
</reference>
<reference key="2">
    <citation type="journal article" date="1992" name="Genomics">
        <title>Chromosomal mapping of the human annexin IV (ANX4) gene.</title>
        <authorList>
            <person name="Tait J.F."/>
            <person name="Smith C."/>
            <person name="Frankenberry D.A."/>
            <person name="Miao C.H."/>
            <person name="Adler D.A."/>
            <person name="Disteche C.M."/>
        </authorList>
    </citation>
    <scope>NUCLEOTIDE SEQUENCE [MRNA] (ISOFORM 3)</scope>
</reference>
<reference key="3">
    <citation type="journal article" date="1997" name="Biol. Pharm. Bull.">
        <title>Characterization of human p33/41 (annexin IV), a Ca2+ dependent carbohydrate-binding protein with monoclonal anti-annexin IV antibodies, AS11 and AS17.</title>
        <authorList>
            <person name="Satoh A."/>
            <person name="Takayama E."/>
            <person name="Kojima K."/>
            <person name="Ogawa H."/>
            <person name="Katsura Y."/>
            <person name="Kina T."/>
            <person name="Matsumoto I."/>
        </authorList>
    </citation>
    <scope>NUCLEOTIDE SEQUENCE [MRNA] (ISOFORM 3)</scope>
</reference>
<reference key="4">
    <citation type="journal article" date="2004" name="Nat. Genet.">
        <title>Complete sequencing and characterization of 21,243 full-length human cDNAs.</title>
        <authorList>
            <person name="Ota T."/>
            <person name="Suzuki Y."/>
            <person name="Nishikawa T."/>
            <person name="Otsuki T."/>
            <person name="Sugiyama T."/>
            <person name="Irie R."/>
            <person name="Wakamatsu A."/>
            <person name="Hayashi K."/>
            <person name="Sato H."/>
            <person name="Nagai K."/>
            <person name="Kimura K."/>
            <person name="Makita H."/>
            <person name="Sekine M."/>
            <person name="Obayashi M."/>
            <person name="Nishi T."/>
            <person name="Shibahara T."/>
            <person name="Tanaka T."/>
            <person name="Ishii S."/>
            <person name="Yamamoto J."/>
            <person name="Saito K."/>
            <person name="Kawai Y."/>
            <person name="Isono Y."/>
            <person name="Nakamura Y."/>
            <person name="Nagahari K."/>
            <person name="Murakami K."/>
            <person name="Yasuda T."/>
            <person name="Iwayanagi T."/>
            <person name="Wagatsuma M."/>
            <person name="Shiratori A."/>
            <person name="Sudo H."/>
            <person name="Hosoiri T."/>
            <person name="Kaku Y."/>
            <person name="Kodaira H."/>
            <person name="Kondo H."/>
            <person name="Sugawara M."/>
            <person name="Takahashi M."/>
            <person name="Kanda K."/>
            <person name="Yokoi T."/>
            <person name="Furuya T."/>
            <person name="Kikkawa E."/>
            <person name="Omura Y."/>
            <person name="Abe K."/>
            <person name="Kamihara K."/>
            <person name="Katsuta N."/>
            <person name="Sato K."/>
            <person name="Tanikawa M."/>
            <person name="Yamazaki M."/>
            <person name="Ninomiya K."/>
            <person name="Ishibashi T."/>
            <person name="Yamashita H."/>
            <person name="Murakawa K."/>
            <person name="Fujimori K."/>
            <person name="Tanai H."/>
            <person name="Kimata M."/>
            <person name="Watanabe M."/>
            <person name="Hiraoka S."/>
            <person name="Chiba Y."/>
            <person name="Ishida S."/>
            <person name="Ono Y."/>
            <person name="Takiguchi S."/>
            <person name="Watanabe S."/>
            <person name="Yosida M."/>
            <person name="Hotuta T."/>
            <person name="Kusano J."/>
            <person name="Kanehori K."/>
            <person name="Takahashi-Fujii A."/>
            <person name="Hara H."/>
            <person name="Tanase T.-O."/>
            <person name="Nomura Y."/>
            <person name="Togiya S."/>
            <person name="Komai F."/>
            <person name="Hara R."/>
            <person name="Takeuchi K."/>
            <person name="Arita M."/>
            <person name="Imose N."/>
            <person name="Musashino K."/>
            <person name="Yuuki H."/>
            <person name="Oshima A."/>
            <person name="Sasaki N."/>
            <person name="Aotsuka S."/>
            <person name="Yoshikawa Y."/>
            <person name="Matsunawa H."/>
            <person name="Ichihara T."/>
            <person name="Shiohata N."/>
            <person name="Sano S."/>
            <person name="Moriya S."/>
            <person name="Momiyama H."/>
            <person name="Satoh N."/>
            <person name="Takami S."/>
            <person name="Terashima Y."/>
            <person name="Suzuki O."/>
            <person name="Nakagawa S."/>
            <person name="Senoh A."/>
            <person name="Mizoguchi H."/>
            <person name="Goto Y."/>
            <person name="Shimizu F."/>
            <person name="Wakebe H."/>
            <person name="Hishigaki H."/>
            <person name="Watanabe T."/>
            <person name="Sugiyama A."/>
            <person name="Takemoto M."/>
            <person name="Kawakami B."/>
            <person name="Yamazaki M."/>
            <person name="Watanabe K."/>
            <person name="Kumagai A."/>
            <person name="Itakura S."/>
            <person name="Fukuzumi Y."/>
            <person name="Fujimori Y."/>
            <person name="Komiyama M."/>
            <person name="Tashiro H."/>
            <person name="Tanigami A."/>
            <person name="Fujiwara T."/>
            <person name="Ono T."/>
            <person name="Yamada K."/>
            <person name="Fujii Y."/>
            <person name="Ozaki K."/>
            <person name="Hirao M."/>
            <person name="Ohmori Y."/>
            <person name="Kawabata A."/>
            <person name="Hikiji T."/>
            <person name="Kobatake N."/>
            <person name="Inagaki H."/>
            <person name="Ikema Y."/>
            <person name="Okamoto S."/>
            <person name="Okitani R."/>
            <person name="Kawakami T."/>
            <person name="Noguchi S."/>
            <person name="Itoh T."/>
            <person name="Shigeta K."/>
            <person name="Senba T."/>
            <person name="Matsumura K."/>
            <person name="Nakajima Y."/>
            <person name="Mizuno T."/>
            <person name="Morinaga M."/>
            <person name="Sasaki M."/>
            <person name="Togashi T."/>
            <person name="Oyama M."/>
            <person name="Hata H."/>
            <person name="Watanabe M."/>
            <person name="Komatsu T."/>
            <person name="Mizushima-Sugano J."/>
            <person name="Satoh T."/>
            <person name="Shirai Y."/>
            <person name="Takahashi Y."/>
            <person name="Nakagawa K."/>
            <person name="Okumura K."/>
            <person name="Nagase T."/>
            <person name="Nomura N."/>
            <person name="Kikuchi H."/>
            <person name="Masuho Y."/>
            <person name="Yamashita R."/>
            <person name="Nakai K."/>
            <person name="Yada T."/>
            <person name="Nakamura Y."/>
            <person name="Ohara O."/>
            <person name="Isogai T."/>
            <person name="Sugano S."/>
        </authorList>
    </citation>
    <scope>NUCLEOTIDE SEQUENCE [LARGE SCALE MRNA] (ISOFORM 2)</scope>
    <source>
        <tissue>Adrenal gland</tissue>
    </source>
</reference>
<reference key="5">
    <citation type="journal article" date="2005" name="Nature">
        <title>Generation and annotation of the DNA sequences of human chromosomes 2 and 4.</title>
        <authorList>
            <person name="Hillier L.W."/>
            <person name="Graves T.A."/>
            <person name="Fulton R.S."/>
            <person name="Fulton L.A."/>
            <person name="Pepin K.H."/>
            <person name="Minx P."/>
            <person name="Wagner-McPherson C."/>
            <person name="Layman D."/>
            <person name="Wylie K."/>
            <person name="Sekhon M."/>
            <person name="Becker M.C."/>
            <person name="Fewell G.A."/>
            <person name="Delehaunty K.D."/>
            <person name="Miner T.L."/>
            <person name="Nash W.E."/>
            <person name="Kremitzki C."/>
            <person name="Oddy L."/>
            <person name="Du H."/>
            <person name="Sun H."/>
            <person name="Bradshaw-Cordum H."/>
            <person name="Ali J."/>
            <person name="Carter J."/>
            <person name="Cordes M."/>
            <person name="Harris A."/>
            <person name="Isak A."/>
            <person name="van Brunt A."/>
            <person name="Nguyen C."/>
            <person name="Du F."/>
            <person name="Courtney L."/>
            <person name="Kalicki J."/>
            <person name="Ozersky P."/>
            <person name="Abbott S."/>
            <person name="Armstrong J."/>
            <person name="Belter E.A."/>
            <person name="Caruso L."/>
            <person name="Cedroni M."/>
            <person name="Cotton M."/>
            <person name="Davidson T."/>
            <person name="Desai A."/>
            <person name="Elliott G."/>
            <person name="Erb T."/>
            <person name="Fronick C."/>
            <person name="Gaige T."/>
            <person name="Haakenson W."/>
            <person name="Haglund K."/>
            <person name="Holmes A."/>
            <person name="Harkins R."/>
            <person name="Kim K."/>
            <person name="Kruchowski S.S."/>
            <person name="Strong C.M."/>
            <person name="Grewal N."/>
            <person name="Goyea E."/>
            <person name="Hou S."/>
            <person name="Levy A."/>
            <person name="Martinka S."/>
            <person name="Mead K."/>
            <person name="McLellan M.D."/>
            <person name="Meyer R."/>
            <person name="Randall-Maher J."/>
            <person name="Tomlinson C."/>
            <person name="Dauphin-Kohlberg S."/>
            <person name="Kozlowicz-Reilly A."/>
            <person name="Shah N."/>
            <person name="Swearengen-Shahid S."/>
            <person name="Snider J."/>
            <person name="Strong J.T."/>
            <person name="Thompson J."/>
            <person name="Yoakum M."/>
            <person name="Leonard S."/>
            <person name="Pearman C."/>
            <person name="Trani L."/>
            <person name="Radionenko M."/>
            <person name="Waligorski J.E."/>
            <person name="Wang C."/>
            <person name="Rock S.M."/>
            <person name="Tin-Wollam A.-M."/>
            <person name="Maupin R."/>
            <person name="Latreille P."/>
            <person name="Wendl M.C."/>
            <person name="Yang S.-P."/>
            <person name="Pohl C."/>
            <person name="Wallis J.W."/>
            <person name="Spieth J."/>
            <person name="Bieri T.A."/>
            <person name="Berkowicz N."/>
            <person name="Nelson J.O."/>
            <person name="Osborne J."/>
            <person name="Ding L."/>
            <person name="Meyer R."/>
            <person name="Sabo A."/>
            <person name="Shotland Y."/>
            <person name="Sinha P."/>
            <person name="Wohldmann P.E."/>
            <person name="Cook L.L."/>
            <person name="Hickenbotham M.T."/>
            <person name="Eldred J."/>
            <person name="Williams D."/>
            <person name="Jones T.A."/>
            <person name="She X."/>
            <person name="Ciccarelli F.D."/>
            <person name="Izaurralde E."/>
            <person name="Taylor J."/>
            <person name="Schmutz J."/>
            <person name="Myers R.M."/>
            <person name="Cox D.R."/>
            <person name="Huang X."/>
            <person name="McPherson J.D."/>
            <person name="Mardis E.R."/>
            <person name="Clifton S.W."/>
            <person name="Warren W.C."/>
            <person name="Chinwalla A.T."/>
            <person name="Eddy S.R."/>
            <person name="Marra M.A."/>
            <person name="Ovcharenko I."/>
            <person name="Furey T.S."/>
            <person name="Miller W."/>
            <person name="Eichler E.E."/>
            <person name="Bork P."/>
            <person name="Suyama M."/>
            <person name="Torrents D."/>
            <person name="Waterston R.H."/>
            <person name="Wilson R.K."/>
        </authorList>
    </citation>
    <scope>NUCLEOTIDE SEQUENCE [LARGE SCALE GENOMIC DNA]</scope>
</reference>
<reference key="6">
    <citation type="submission" date="2005-09" db="EMBL/GenBank/DDBJ databases">
        <authorList>
            <person name="Mural R.J."/>
            <person name="Istrail S."/>
            <person name="Sutton G.G."/>
            <person name="Florea L."/>
            <person name="Halpern A.L."/>
            <person name="Mobarry C.M."/>
            <person name="Lippert R."/>
            <person name="Walenz B."/>
            <person name="Shatkay H."/>
            <person name="Dew I."/>
            <person name="Miller J.R."/>
            <person name="Flanigan M.J."/>
            <person name="Edwards N.J."/>
            <person name="Bolanos R."/>
            <person name="Fasulo D."/>
            <person name="Halldorsson B.V."/>
            <person name="Hannenhalli S."/>
            <person name="Turner R."/>
            <person name="Yooseph S."/>
            <person name="Lu F."/>
            <person name="Nusskern D.R."/>
            <person name="Shue B.C."/>
            <person name="Zheng X.H."/>
            <person name="Zhong F."/>
            <person name="Delcher A.L."/>
            <person name="Huson D.H."/>
            <person name="Kravitz S.A."/>
            <person name="Mouchard L."/>
            <person name="Reinert K."/>
            <person name="Remington K.A."/>
            <person name="Clark A.G."/>
            <person name="Waterman M.S."/>
            <person name="Eichler E.E."/>
            <person name="Adams M.D."/>
            <person name="Hunkapiller M.W."/>
            <person name="Myers E.W."/>
            <person name="Venter J.C."/>
        </authorList>
    </citation>
    <scope>NUCLEOTIDE SEQUENCE [LARGE SCALE GENOMIC DNA]</scope>
</reference>
<reference key="7">
    <citation type="journal article" date="2004" name="Genome Res.">
        <title>The status, quality, and expansion of the NIH full-length cDNA project: the Mammalian Gene Collection (MGC).</title>
        <authorList>
            <consortium name="The MGC Project Team"/>
        </authorList>
    </citation>
    <scope>NUCLEOTIDE SEQUENCE [LARGE SCALE MRNA] (ISOFORM 3)</scope>
    <source>
        <tissue>Eye</tissue>
        <tissue>Uterus</tissue>
    </source>
</reference>
<reference key="8">
    <citation type="journal article" date="1988" name="Biochemistry">
        <title>Placental anticoagulant proteins: isolation and comparative characterization four members of the lipocortin family.</title>
        <authorList>
            <person name="Tait J.F."/>
            <person name="Sakata M."/>
            <person name="McMullen B.A."/>
            <person name="Miao C.H."/>
            <person name="Funakoshi T."/>
            <person name="Hendrickson L.E."/>
            <person name="Fujikawa K."/>
        </authorList>
    </citation>
    <scope>PROTEIN SEQUENCE OF 2-15; 28-72; 100-144 AND 281-319</scope>
</reference>
<reference key="9">
    <citation type="journal article" date="1988" name="J. Biol. Chem.">
        <title>Sedimentation equilibrium analysis of five lipocortin-related phospholipase A2 inhibitors from human placenta. Evidence against a mechanistically relevant association between enzyme and inhibitor.</title>
        <authorList>
            <person name="Ahn N.G."/>
            <person name="Teller D.C."/>
            <person name="Bienkowski M.J."/>
            <person name="McMullen B.A."/>
            <person name="Lipkin E.W."/>
            <person name="de Haen C."/>
        </authorList>
    </citation>
    <scope>PROTEIN SEQUENCE OF 27-56; 99-124 AND 280-308</scope>
    <source>
        <tissue>Placenta</tissue>
    </source>
</reference>
<reference key="10">
    <citation type="journal article" date="2009" name="Science">
        <title>Lysine acetylation targets protein complexes and co-regulates major cellular functions.</title>
        <authorList>
            <person name="Choudhary C."/>
            <person name="Kumar C."/>
            <person name="Gnad F."/>
            <person name="Nielsen M.L."/>
            <person name="Rehman M."/>
            <person name="Walther T.C."/>
            <person name="Olsen J.V."/>
            <person name="Mann M."/>
        </authorList>
    </citation>
    <scope>ACETYLATION [LARGE SCALE ANALYSIS] AT LYS-213; LYS-293 AND LYS-300</scope>
    <scope>IDENTIFICATION BY MASS SPECTROMETRY [LARGE SCALE ANALYSIS]</scope>
</reference>
<reference key="11">
    <citation type="journal article" date="2011" name="BMC Syst. Biol.">
        <title>Initial characterization of the human central proteome.</title>
        <authorList>
            <person name="Burkard T.R."/>
            <person name="Planyavsky M."/>
            <person name="Kaupe I."/>
            <person name="Breitwieser F.P."/>
            <person name="Buerckstuemmer T."/>
            <person name="Bennett K.L."/>
            <person name="Superti-Furga G."/>
            <person name="Colinge J."/>
        </authorList>
    </citation>
    <scope>IDENTIFICATION BY MASS SPECTROMETRY [LARGE SCALE ANALYSIS]</scope>
</reference>
<reference key="12">
    <citation type="journal article" date="2012" name="Proc. Natl. Acad. Sci. U.S.A.">
        <title>N-terminal acetylome analyses and functional insights of the N-terminal acetyltransferase NatB.</title>
        <authorList>
            <person name="Van Damme P."/>
            <person name="Lasa M."/>
            <person name="Polevoda B."/>
            <person name="Gazquez C."/>
            <person name="Elosegui-Artola A."/>
            <person name="Kim D.S."/>
            <person name="De Juan-Pardo E."/>
            <person name="Demeyer K."/>
            <person name="Hole K."/>
            <person name="Larrea E."/>
            <person name="Timmerman E."/>
            <person name="Prieto J."/>
            <person name="Arnesen T."/>
            <person name="Sherman F."/>
            <person name="Gevaert K."/>
            <person name="Aldabe R."/>
        </authorList>
    </citation>
    <scope>ACETYLATION [LARGE SCALE ANALYSIS] AT ALA-2</scope>
    <scope>CLEAVAGE OF INITIATOR METHIONINE [LARGE SCALE ANALYSIS]</scope>
    <scope>IDENTIFICATION BY MASS SPECTROMETRY [LARGE SCALE ANALYSIS]</scope>
</reference>
<reference key="13">
    <citation type="journal article" date="2014" name="J. Proteomics">
        <title>An enzyme assisted RP-RPLC approach for in-depth analysis of human liver phosphoproteome.</title>
        <authorList>
            <person name="Bian Y."/>
            <person name="Song C."/>
            <person name="Cheng K."/>
            <person name="Dong M."/>
            <person name="Wang F."/>
            <person name="Huang J."/>
            <person name="Sun D."/>
            <person name="Wang L."/>
            <person name="Ye M."/>
            <person name="Zou H."/>
        </authorList>
    </citation>
    <scope>PHOSPHORYLATION [LARGE SCALE ANALYSIS] AT SER-12</scope>
    <scope>IDENTIFICATION BY MASS SPECTROMETRY [LARGE SCALE ANALYSIS]</scope>
    <source>
        <tissue>Liver</tissue>
    </source>
</reference>
<reference key="14">
    <citation type="journal article" date="1990" name="J. Mol. Biol.">
        <title>Crystallization and preliminary X-ray crystallographic studies of human placental annexin IV.</title>
        <authorList>
            <person name="Freemont P.S."/>
            <person name="Driessen H.P.C."/>
            <person name="Verbi W."/>
            <person name="Crumpton M.J."/>
        </authorList>
    </citation>
    <scope>X-RAY CRYSTALLOGRAPHY (2.5 ANGSTROMS)</scope>
</reference>
<sequence>MATKGGTVKAASGFNAMEDAQTLRKAMKGLGTDEDAIISVLAYRNTAQRQEIRTAYKSTIGRDLIDDLKSELSGNFEQVIVGMMTPTVLYDVQELRRAMKGAGTDEGCLIEILASRTPEEIRRISQTYQQQYGRSLEDDIRSDTSFMFQRVLVSLSAGGRDEGNYLDDALVRQDAQDLYEAGEKKWGTDEVKFLTVLCSRNRNHLLHVFDEYKRISQKDIEQSIKSETSGSFEDALLAIVKCMRNKSAYFAEKLYKSMKGLGTDDNTLIRVMVSRAEIDMLDIRAHFKRLYGKSLYSFIKGDTSGDYRKVLLVLCGGDD</sequence>
<organism>
    <name type="scientific">Homo sapiens</name>
    <name type="common">Human</name>
    <dbReference type="NCBI Taxonomy" id="9606"/>
    <lineage>
        <taxon>Eukaryota</taxon>
        <taxon>Metazoa</taxon>
        <taxon>Chordata</taxon>
        <taxon>Craniata</taxon>
        <taxon>Vertebrata</taxon>
        <taxon>Euteleostomi</taxon>
        <taxon>Mammalia</taxon>
        <taxon>Eutheria</taxon>
        <taxon>Euarchontoglires</taxon>
        <taxon>Primates</taxon>
        <taxon>Haplorrhini</taxon>
        <taxon>Catarrhini</taxon>
        <taxon>Hominidae</taxon>
        <taxon>Homo</taxon>
    </lineage>
</organism>
<dbReference type="EMBL" id="M19383">
    <property type="protein sequence ID" value="AAC41689.1"/>
    <property type="molecule type" value="mRNA"/>
</dbReference>
<dbReference type="EMBL" id="M82809">
    <property type="protein sequence ID" value="AAA51740.1"/>
    <property type="molecule type" value="mRNA"/>
</dbReference>
<dbReference type="EMBL" id="D78152">
    <property type="protein sequence ID" value="BAA11227.1"/>
    <property type="molecule type" value="mRNA"/>
</dbReference>
<dbReference type="EMBL" id="AK293177">
    <property type="protein sequence ID" value="BAG56720.1"/>
    <property type="molecule type" value="mRNA"/>
</dbReference>
<dbReference type="EMBL" id="AY453398">
    <property type="protein sequence ID" value="AAS47515.1"/>
    <property type="molecule type" value="mRNA"/>
</dbReference>
<dbReference type="EMBL" id="AK315511">
    <property type="protein sequence ID" value="BAG37892.1"/>
    <property type="molecule type" value="mRNA"/>
</dbReference>
<dbReference type="EMBL" id="CR407681">
    <property type="protein sequence ID" value="CAG28609.1"/>
    <property type="molecule type" value="mRNA"/>
</dbReference>
<dbReference type="EMBL" id="AC019206">
    <property type="protein sequence ID" value="AAY14864.1"/>
    <property type="molecule type" value="Genomic_DNA"/>
</dbReference>
<dbReference type="EMBL" id="AC092431">
    <property type="status" value="NOT_ANNOTATED_CDS"/>
    <property type="molecule type" value="Genomic_DNA"/>
</dbReference>
<dbReference type="EMBL" id="AC112787">
    <property type="status" value="NOT_ANNOTATED_CDS"/>
    <property type="molecule type" value="Genomic_DNA"/>
</dbReference>
<dbReference type="EMBL" id="CH471053">
    <property type="protein sequence ID" value="EAW99844.1"/>
    <property type="molecule type" value="Genomic_DNA"/>
</dbReference>
<dbReference type="EMBL" id="BC000182">
    <property type="protein sequence ID" value="AAH00182.1"/>
    <property type="molecule type" value="mRNA"/>
</dbReference>
<dbReference type="EMBL" id="BC011659">
    <property type="protein sequence ID" value="AAH11659.1"/>
    <property type="molecule type" value="mRNA"/>
</dbReference>
<dbReference type="CCDS" id="CCDS1894.1">
    <molecule id="P09525-3"/>
</dbReference>
<dbReference type="PIR" id="A42077">
    <property type="entry name" value="A42077"/>
</dbReference>
<dbReference type="RefSeq" id="NP_001144.1">
    <molecule id="P09525-3"/>
    <property type="nucleotide sequence ID" value="NM_001153.5"/>
</dbReference>
<dbReference type="RefSeq" id="NP_001307627.1">
    <molecule id="P09525-3"/>
    <property type="nucleotide sequence ID" value="NM_001320698.2"/>
</dbReference>
<dbReference type="RefSeq" id="NP_001307629.1">
    <property type="nucleotide sequence ID" value="NM_001320700.1"/>
</dbReference>
<dbReference type="RefSeq" id="NP_001307631.1">
    <molecule id="P09525-2"/>
    <property type="nucleotide sequence ID" value="NM_001320702.2"/>
</dbReference>
<dbReference type="RefSeq" id="NP_001352425.1">
    <molecule id="P09525-3"/>
    <property type="nucleotide sequence ID" value="NM_001365496.2"/>
</dbReference>
<dbReference type="RefSeq" id="XP_016859432.1">
    <molecule id="P09525-3"/>
    <property type="nucleotide sequence ID" value="XM_017003943.2"/>
</dbReference>
<dbReference type="RefSeq" id="XP_016859433.1">
    <property type="nucleotide sequence ID" value="XM_017003944.1"/>
</dbReference>
<dbReference type="RefSeq" id="XP_024308603.1">
    <molecule id="P09525-3"/>
    <property type="nucleotide sequence ID" value="XM_024452835.2"/>
</dbReference>
<dbReference type="RefSeq" id="XP_047300036.1">
    <molecule id="P09525-3"/>
    <property type="nucleotide sequence ID" value="XM_047444080.1"/>
</dbReference>
<dbReference type="RefSeq" id="XP_047300037.1">
    <molecule id="P09525-3"/>
    <property type="nucleotide sequence ID" value="XM_047444081.1"/>
</dbReference>
<dbReference type="RefSeq" id="XP_047300038.1">
    <molecule id="P09525-3"/>
    <property type="nucleotide sequence ID" value="XM_047444082.1"/>
</dbReference>
<dbReference type="RefSeq" id="XP_047300039.1">
    <molecule id="P09525-3"/>
    <property type="nucleotide sequence ID" value="XM_047444083.1"/>
</dbReference>
<dbReference type="RefSeq" id="XP_054197608.1">
    <molecule id="P09525-3"/>
    <property type="nucleotide sequence ID" value="XM_054341633.1"/>
</dbReference>
<dbReference type="RefSeq" id="XP_054197609.1">
    <molecule id="P09525-3"/>
    <property type="nucleotide sequence ID" value="XM_054341634.1"/>
</dbReference>
<dbReference type="RefSeq" id="XP_054197610.1">
    <molecule id="P09525-3"/>
    <property type="nucleotide sequence ID" value="XM_054341635.1"/>
</dbReference>
<dbReference type="RefSeq" id="XP_054197611.1">
    <molecule id="P09525-3"/>
    <property type="nucleotide sequence ID" value="XM_054341636.1"/>
</dbReference>
<dbReference type="RefSeq" id="XP_054197612.1">
    <molecule id="P09525-3"/>
    <property type="nucleotide sequence ID" value="XM_054341637.1"/>
</dbReference>
<dbReference type="RefSeq" id="XP_054197613.1">
    <molecule id="P09525-3"/>
    <property type="nucleotide sequence ID" value="XM_054341638.1"/>
</dbReference>
<dbReference type="PDB" id="2ZOC">
    <property type="method" value="X-ray"/>
    <property type="resolution" value="2.00 A"/>
    <property type="chains" value="A/B=1-319"/>
</dbReference>
<dbReference type="PDBsum" id="2ZOC"/>
<dbReference type="SMR" id="P09525"/>
<dbReference type="BioGRID" id="106804">
    <property type="interactions" value="51"/>
</dbReference>
<dbReference type="FunCoup" id="P09525">
    <property type="interactions" value="1596"/>
</dbReference>
<dbReference type="IntAct" id="P09525">
    <property type="interactions" value="29"/>
</dbReference>
<dbReference type="MINT" id="P09525"/>
<dbReference type="STRING" id="9606.ENSP00000377833"/>
<dbReference type="DrugBank" id="DB09130">
    <property type="generic name" value="Copper"/>
</dbReference>
<dbReference type="DrugBank" id="DB00591">
    <property type="generic name" value="Fluocinolone acetonide"/>
</dbReference>
<dbReference type="GlyGen" id="P09525">
    <property type="glycosylation" value="1 site, 1 O-linked glycan (1 site)"/>
</dbReference>
<dbReference type="iPTMnet" id="P09525"/>
<dbReference type="MetOSite" id="P09525"/>
<dbReference type="PhosphoSitePlus" id="P09525"/>
<dbReference type="SwissPalm" id="P09525"/>
<dbReference type="BioMuta" id="ANXA4"/>
<dbReference type="DMDM" id="1703319"/>
<dbReference type="OGP" id="P09525"/>
<dbReference type="REPRODUCTION-2DPAGE" id="IPI00793199"/>
<dbReference type="REPRODUCTION-2DPAGE" id="P09525"/>
<dbReference type="CPTAC" id="CPTAC-1381"/>
<dbReference type="CPTAC" id="CPTAC-1382"/>
<dbReference type="CPTAC" id="CPTAC-1383"/>
<dbReference type="CPTAC" id="CPTAC-1384"/>
<dbReference type="CPTAC" id="CPTAC-19"/>
<dbReference type="CPTAC" id="CPTAC-20"/>
<dbReference type="jPOST" id="P09525"/>
<dbReference type="MassIVE" id="P09525"/>
<dbReference type="PaxDb" id="9606-ENSP00000377833"/>
<dbReference type="PeptideAtlas" id="P09525"/>
<dbReference type="PRIDE" id="P09525"/>
<dbReference type="ProteomicsDB" id="3854"/>
<dbReference type="ProteomicsDB" id="52242">
    <molecule id="P09525-1"/>
</dbReference>
<dbReference type="ABCD" id="P09525">
    <property type="antibodies" value="1 sequenced antibody"/>
</dbReference>
<dbReference type="Antibodypedia" id="1552">
    <property type="antibodies" value="509 antibodies from 42 providers"/>
</dbReference>
<dbReference type="CPTC" id="P09525">
    <property type="antibodies" value="1 antibody"/>
</dbReference>
<dbReference type="DNASU" id="307"/>
<dbReference type="Ensembl" id="ENST00000394295.6">
    <molecule id="P09525-3"/>
    <property type="protein sequence ID" value="ENSP00000377833.4"/>
    <property type="gene ID" value="ENSG00000196975.16"/>
</dbReference>
<dbReference type="GeneID" id="307"/>
<dbReference type="KEGG" id="hsa:307"/>
<dbReference type="MANE-Select" id="ENST00000394295.6">
    <molecule id="P09525-3"/>
    <property type="protein sequence ID" value="ENSP00000377833.4"/>
    <property type="RefSeq nucleotide sequence ID" value="NM_001153.5"/>
    <property type="RefSeq protein sequence ID" value="NP_001144.1"/>
</dbReference>
<dbReference type="UCSC" id="uc002sfr.5">
    <property type="organism name" value="human"/>
</dbReference>
<dbReference type="AGR" id="HGNC:542"/>
<dbReference type="CTD" id="307"/>
<dbReference type="DisGeNET" id="307"/>
<dbReference type="GeneCards" id="ANXA4"/>
<dbReference type="HGNC" id="HGNC:542">
    <property type="gene designation" value="ANXA4"/>
</dbReference>
<dbReference type="HPA" id="ENSG00000196975">
    <property type="expression patterns" value="Tissue enhanced (gallbladder, pancreas)"/>
</dbReference>
<dbReference type="MIM" id="106491">
    <property type="type" value="gene"/>
</dbReference>
<dbReference type="neXtProt" id="NX_P09525"/>
<dbReference type="OpenTargets" id="ENSG00000196975"/>
<dbReference type="PharmGKB" id="PA24832"/>
<dbReference type="VEuPathDB" id="HostDB:ENSG00000196975"/>
<dbReference type="eggNOG" id="KOG0819">
    <property type="taxonomic scope" value="Eukaryota"/>
</dbReference>
<dbReference type="GeneTree" id="ENSGT00940000156575"/>
<dbReference type="InParanoid" id="P09525"/>
<dbReference type="OMA" id="ASNWVIM"/>
<dbReference type="OrthoDB" id="37886at2759"/>
<dbReference type="PAN-GO" id="P09525">
    <property type="GO annotations" value="2 GO annotations based on evolutionary models"/>
</dbReference>
<dbReference type="PhylomeDB" id="P09525"/>
<dbReference type="TreeFam" id="TF105452"/>
<dbReference type="PathwayCommons" id="P09525"/>
<dbReference type="SignaLink" id="P09525"/>
<dbReference type="BioGRID-ORCS" id="307">
    <property type="hits" value="4 hits in 1156 CRISPR screens"/>
</dbReference>
<dbReference type="CD-CODE" id="DEE660B4">
    <property type="entry name" value="Stress granule"/>
</dbReference>
<dbReference type="ChiTaRS" id="ANXA4">
    <property type="organism name" value="human"/>
</dbReference>
<dbReference type="EvolutionaryTrace" id="P09525"/>
<dbReference type="GeneWiki" id="ANXA4"/>
<dbReference type="GenomeRNAi" id="307"/>
<dbReference type="Pharos" id="P09525">
    <property type="development level" value="Tbio"/>
</dbReference>
<dbReference type="PRO" id="PR:P09525"/>
<dbReference type="Proteomes" id="UP000005640">
    <property type="component" value="Chromosome 2"/>
</dbReference>
<dbReference type="RNAct" id="P09525">
    <property type="molecule type" value="protein"/>
</dbReference>
<dbReference type="Bgee" id="ENSG00000196975">
    <property type="expression patterns" value="Expressed in pancreatic ductal cell and 207 other cell types or tissues"/>
</dbReference>
<dbReference type="ExpressionAtlas" id="P09525">
    <property type="expression patterns" value="baseline and differential"/>
</dbReference>
<dbReference type="GO" id="GO:0009986">
    <property type="term" value="C:cell surface"/>
    <property type="evidence" value="ECO:0000314"/>
    <property type="project" value="BHF-UCL"/>
</dbReference>
<dbReference type="GO" id="GO:0062023">
    <property type="term" value="C:collagen-containing extracellular matrix"/>
    <property type="evidence" value="ECO:0007005"/>
    <property type="project" value="BHF-UCL"/>
</dbReference>
<dbReference type="GO" id="GO:0005737">
    <property type="term" value="C:cytoplasm"/>
    <property type="evidence" value="ECO:0000314"/>
    <property type="project" value="BHF-UCL"/>
</dbReference>
<dbReference type="GO" id="GO:0070062">
    <property type="term" value="C:extracellular exosome"/>
    <property type="evidence" value="ECO:0007005"/>
    <property type="project" value="UniProtKB"/>
</dbReference>
<dbReference type="GO" id="GO:0031965">
    <property type="term" value="C:nuclear membrane"/>
    <property type="evidence" value="ECO:0000314"/>
    <property type="project" value="BHF-UCL"/>
</dbReference>
<dbReference type="GO" id="GO:0005634">
    <property type="term" value="C:nucleus"/>
    <property type="evidence" value="ECO:0000314"/>
    <property type="project" value="BHF-UCL"/>
</dbReference>
<dbReference type="GO" id="GO:0048471">
    <property type="term" value="C:perinuclear region of cytoplasm"/>
    <property type="evidence" value="ECO:0000314"/>
    <property type="project" value="BHF-UCL"/>
</dbReference>
<dbReference type="GO" id="GO:0005886">
    <property type="term" value="C:plasma membrane"/>
    <property type="evidence" value="ECO:0000314"/>
    <property type="project" value="BHF-UCL"/>
</dbReference>
<dbReference type="GO" id="GO:0012506">
    <property type="term" value="C:vesicle membrane"/>
    <property type="evidence" value="ECO:0000314"/>
    <property type="project" value="BHF-UCL"/>
</dbReference>
<dbReference type="GO" id="GO:0042589">
    <property type="term" value="C:zymogen granule membrane"/>
    <property type="evidence" value="ECO:0007669"/>
    <property type="project" value="UniProtKB-SubCell"/>
</dbReference>
<dbReference type="GO" id="GO:0005509">
    <property type="term" value="F:calcium ion binding"/>
    <property type="evidence" value="ECO:0000314"/>
    <property type="project" value="BHF-UCL"/>
</dbReference>
<dbReference type="GO" id="GO:0005544">
    <property type="term" value="F:calcium-dependent phospholipid binding"/>
    <property type="evidence" value="ECO:0000314"/>
    <property type="project" value="UniProtKB"/>
</dbReference>
<dbReference type="GO" id="GO:0048306">
    <property type="term" value="F:calcium-dependent protein binding"/>
    <property type="evidence" value="ECO:0000353"/>
    <property type="project" value="GO_Central"/>
</dbReference>
<dbReference type="GO" id="GO:0042802">
    <property type="term" value="F:identical protein binding"/>
    <property type="evidence" value="ECO:0000353"/>
    <property type="project" value="BHF-UCL"/>
</dbReference>
<dbReference type="GO" id="GO:0051059">
    <property type="term" value="F:NF-kappaB binding"/>
    <property type="evidence" value="ECO:0000353"/>
    <property type="project" value="BHF-UCL"/>
</dbReference>
<dbReference type="GO" id="GO:0001786">
    <property type="term" value="F:phosphatidylserine binding"/>
    <property type="evidence" value="ECO:0000318"/>
    <property type="project" value="GO_Central"/>
</dbReference>
<dbReference type="GO" id="GO:0004859">
    <property type="term" value="F:phospholipase inhibitor activity"/>
    <property type="evidence" value="ECO:0000303"/>
    <property type="project" value="UniProtKB"/>
</dbReference>
<dbReference type="GO" id="GO:0140416">
    <property type="term" value="F:transcription regulator inhibitor activity"/>
    <property type="evidence" value="ECO:0000314"/>
    <property type="project" value="BHF-UCL"/>
</dbReference>
<dbReference type="GO" id="GO:0030855">
    <property type="term" value="P:epithelial cell differentiation"/>
    <property type="evidence" value="ECO:0000270"/>
    <property type="project" value="UniProtKB"/>
</dbReference>
<dbReference type="GO" id="GO:0043066">
    <property type="term" value="P:negative regulation of apoptotic process"/>
    <property type="evidence" value="ECO:0000304"/>
    <property type="project" value="UniProtKB"/>
</dbReference>
<dbReference type="GO" id="GO:0043124">
    <property type="term" value="P:negative regulation of canonical NF-kappaB signal transduction"/>
    <property type="evidence" value="ECO:0000314"/>
    <property type="project" value="BHF-UCL"/>
</dbReference>
<dbReference type="GO" id="GO:0032717">
    <property type="term" value="P:negative regulation of interleukin-8 production"/>
    <property type="evidence" value="ECO:0000315"/>
    <property type="project" value="BHF-UCL"/>
</dbReference>
<dbReference type="GO" id="GO:0000122">
    <property type="term" value="P:negative regulation of transcription by RNA polymerase II"/>
    <property type="evidence" value="ECO:0000314"/>
    <property type="project" value="BHF-UCL"/>
</dbReference>
<dbReference type="GO" id="GO:0010804">
    <property type="term" value="P:negative regulation of tumor necrosis factor-mediated signaling pathway"/>
    <property type="evidence" value="ECO:0000315"/>
    <property type="project" value="BHF-UCL"/>
</dbReference>
<dbReference type="GO" id="GO:0007219">
    <property type="term" value="P:Notch signaling pathway"/>
    <property type="evidence" value="ECO:0007669"/>
    <property type="project" value="Ensembl"/>
</dbReference>
<dbReference type="GO" id="GO:0007165">
    <property type="term" value="P:signal transduction"/>
    <property type="evidence" value="ECO:0000304"/>
    <property type="project" value="UniProtKB"/>
</dbReference>
<dbReference type="FunFam" id="1.10.220.10:FF:000002">
    <property type="entry name" value="Annexin"/>
    <property type="match status" value="1"/>
</dbReference>
<dbReference type="FunFam" id="1.10.220.10:FF:000003">
    <property type="entry name" value="Annexin"/>
    <property type="match status" value="1"/>
</dbReference>
<dbReference type="FunFam" id="1.10.220.10:FF:000004">
    <property type="entry name" value="Annexin"/>
    <property type="match status" value="1"/>
</dbReference>
<dbReference type="FunFam" id="1.10.220.10:FF:000022">
    <property type="entry name" value="Annexin A5"/>
    <property type="match status" value="1"/>
</dbReference>
<dbReference type="Gene3D" id="1.10.220.10">
    <property type="entry name" value="Annexin"/>
    <property type="match status" value="4"/>
</dbReference>
<dbReference type="InterPro" id="IPR001464">
    <property type="entry name" value="Annexin"/>
</dbReference>
<dbReference type="InterPro" id="IPR018502">
    <property type="entry name" value="Annexin_repeat"/>
</dbReference>
<dbReference type="InterPro" id="IPR018252">
    <property type="entry name" value="Annexin_repeat_CS"/>
</dbReference>
<dbReference type="InterPro" id="IPR037104">
    <property type="entry name" value="Annexin_sf"/>
</dbReference>
<dbReference type="InterPro" id="IPR002391">
    <property type="entry name" value="ANX4"/>
</dbReference>
<dbReference type="PANTHER" id="PTHR10502">
    <property type="entry name" value="ANNEXIN"/>
    <property type="match status" value="1"/>
</dbReference>
<dbReference type="PANTHER" id="PTHR10502:SF28">
    <property type="entry name" value="ANNEXIN A4"/>
    <property type="match status" value="1"/>
</dbReference>
<dbReference type="Pfam" id="PF00191">
    <property type="entry name" value="Annexin"/>
    <property type="match status" value="4"/>
</dbReference>
<dbReference type="PRINTS" id="PR00196">
    <property type="entry name" value="ANNEXIN"/>
</dbReference>
<dbReference type="PRINTS" id="PR00200">
    <property type="entry name" value="ANNEXINIV"/>
</dbReference>
<dbReference type="SMART" id="SM00335">
    <property type="entry name" value="ANX"/>
    <property type="match status" value="4"/>
</dbReference>
<dbReference type="SUPFAM" id="SSF47874">
    <property type="entry name" value="Annexin"/>
    <property type="match status" value="1"/>
</dbReference>
<dbReference type="PROSITE" id="PS00223">
    <property type="entry name" value="ANNEXIN_1"/>
    <property type="match status" value="4"/>
</dbReference>
<dbReference type="PROSITE" id="PS51897">
    <property type="entry name" value="ANNEXIN_2"/>
    <property type="match status" value="4"/>
</dbReference>
<feature type="initiator methionine" description="Removed" evidence="5 10">
    <location>
        <position position="1"/>
    </location>
</feature>
<feature type="chain" id="PRO_0000067482" description="Annexin A4">
    <location>
        <begin position="2"/>
        <end position="319"/>
    </location>
</feature>
<feature type="repeat" description="Annexin 1" evidence="4">
    <location>
        <begin position="14"/>
        <end position="85"/>
    </location>
</feature>
<feature type="repeat" description="Annexin 2" evidence="4">
    <location>
        <begin position="86"/>
        <end position="157"/>
    </location>
</feature>
<feature type="repeat" description="Annexin 3" evidence="4">
    <location>
        <begin position="169"/>
        <end position="241"/>
    </location>
</feature>
<feature type="repeat" description="Annexin 4" evidence="4">
    <location>
        <begin position="245"/>
        <end position="316"/>
    </location>
</feature>
<feature type="modified residue" description="N-acetylalanine" evidence="10">
    <location>
        <position position="2"/>
    </location>
</feature>
<feature type="modified residue" description="Phosphothreonine" evidence="2">
    <location>
        <position position="7"/>
    </location>
</feature>
<feature type="modified residue" description="Phosphoserine" evidence="11">
    <location>
        <position position="12"/>
    </location>
</feature>
<feature type="modified residue" description="N6-acetyllysine" evidence="9">
    <location>
        <position position="213"/>
    </location>
</feature>
<feature type="modified residue" description="N6-acetyllysine" evidence="9">
    <location>
        <position position="293"/>
    </location>
</feature>
<feature type="modified residue" description="N6-acetyllysine" evidence="9">
    <location>
        <position position="300"/>
    </location>
</feature>
<feature type="splice variant" id="VSP_056396" description="In isoform 2." evidence="6">
    <location>
        <begin position="1"/>
        <end position="82"/>
    </location>
</feature>
<feature type="splice variant" id="VSP_061413" description="In isoform 3.">
    <original>M</original>
    <variation>MAM</variation>
    <location>
        <position position="1"/>
    </location>
</feature>
<feature type="sequence variant" id="VAR_055500" description="In dbSNP:rs2228203.">
    <original>T</original>
    <variation>M</variation>
    <location>
        <position position="85"/>
    </location>
</feature>
<feature type="sequence conflict" description="In Ref. 1; AAC41689." evidence="7" ref="1">
    <original>R</original>
    <variation>Q</variation>
    <location>
        <position position="96"/>
    </location>
</feature>
<feature type="helix" evidence="12">
    <location>
        <begin position="16"/>
        <end position="26"/>
    </location>
</feature>
<feature type="strand" evidence="12">
    <location>
        <begin position="28"/>
        <end position="31"/>
    </location>
</feature>
<feature type="helix" evidence="12">
    <location>
        <begin position="34"/>
        <end position="41"/>
    </location>
</feature>
<feature type="helix" evidence="12">
    <location>
        <begin position="46"/>
        <end position="59"/>
    </location>
</feature>
<feature type="helix" evidence="12">
    <location>
        <begin position="64"/>
        <end position="71"/>
    </location>
</feature>
<feature type="helix" evidence="12">
    <location>
        <begin position="74"/>
        <end position="84"/>
    </location>
</feature>
<feature type="helix" evidence="12">
    <location>
        <begin position="87"/>
        <end position="99"/>
    </location>
</feature>
<feature type="strand" evidence="12">
    <location>
        <begin position="100"/>
        <end position="103"/>
    </location>
</feature>
<feature type="helix" evidence="12">
    <location>
        <begin position="106"/>
        <end position="115"/>
    </location>
</feature>
<feature type="helix" evidence="12">
    <location>
        <begin position="118"/>
        <end position="132"/>
    </location>
</feature>
<feature type="helix" evidence="12">
    <location>
        <begin position="136"/>
        <end position="143"/>
    </location>
</feature>
<feature type="helix" evidence="12">
    <location>
        <begin position="146"/>
        <end position="155"/>
    </location>
</feature>
<feature type="turn" evidence="12">
    <location>
        <begin position="156"/>
        <end position="158"/>
    </location>
</feature>
<feature type="helix" evidence="12">
    <location>
        <begin position="168"/>
        <end position="181"/>
    </location>
</feature>
<feature type="turn" evidence="12">
    <location>
        <begin position="182"/>
        <end position="184"/>
    </location>
</feature>
<feature type="strand" evidence="12">
    <location>
        <begin position="185"/>
        <end position="187"/>
    </location>
</feature>
<feature type="helix" evidence="12">
    <location>
        <begin position="190"/>
        <end position="199"/>
    </location>
</feature>
<feature type="helix" evidence="12">
    <location>
        <begin position="202"/>
        <end position="216"/>
    </location>
</feature>
<feature type="helix" evidence="12">
    <location>
        <begin position="220"/>
        <end position="227"/>
    </location>
</feature>
<feature type="helix" evidence="12">
    <location>
        <begin position="230"/>
        <end position="244"/>
    </location>
</feature>
<feature type="helix" evidence="12">
    <location>
        <begin position="246"/>
        <end position="258"/>
    </location>
</feature>
<feature type="strand" evidence="12">
    <location>
        <begin position="259"/>
        <end position="262"/>
    </location>
</feature>
<feature type="helix" evidence="12">
    <location>
        <begin position="265"/>
        <end position="275"/>
    </location>
</feature>
<feature type="turn" evidence="12">
    <location>
        <begin position="276"/>
        <end position="279"/>
    </location>
</feature>
<feature type="helix" evidence="12">
    <location>
        <begin position="280"/>
        <end position="291"/>
    </location>
</feature>
<feature type="helix" evidence="12">
    <location>
        <begin position="295"/>
        <end position="302"/>
    </location>
</feature>
<feature type="helix" evidence="12">
    <location>
        <begin position="305"/>
        <end position="315"/>
    </location>
</feature>
<proteinExistence type="evidence at protein level"/>
<keyword id="KW-0002">3D-structure</keyword>
<keyword id="KW-0007">Acetylation</keyword>
<keyword id="KW-0024">Alternative initiation</keyword>
<keyword id="KW-0025">Alternative splicing</keyword>
<keyword id="KW-0041">Annexin</keyword>
<keyword id="KW-0106">Calcium</keyword>
<keyword id="KW-0111">Calcium/phospholipid-binding</keyword>
<keyword id="KW-0968">Cytoplasmic vesicle</keyword>
<keyword id="KW-0903">Direct protein sequencing</keyword>
<keyword id="KW-0472">Membrane</keyword>
<keyword id="KW-0597">Phosphoprotein</keyword>
<keyword id="KW-1267">Proteomics identification</keyword>
<keyword id="KW-1185">Reference proteome</keyword>
<keyword id="KW-0677">Repeat</keyword>